<comment type="catalytic activity">
    <reaction evidence="1">
        <text>5-amino-1-(5-phospho-D-ribosyl)imidazole-4-carboxylate + L-aspartate + ATP = (2S)-2-[5-amino-1-(5-phospho-beta-D-ribosyl)imidazole-4-carboxamido]succinate + ADP + phosphate + 2 H(+)</text>
        <dbReference type="Rhea" id="RHEA:22628"/>
        <dbReference type="ChEBI" id="CHEBI:15378"/>
        <dbReference type="ChEBI" id="CHEBI:29991"/>
        <dbReference type="ChEBI" id="CHEBI:30616"/>
        <dbReference type="ChEBI" id="CHEBI:43474"/>
        <dbReference type="ChEBI" id="CHEBI:58443"/>
        <dbReference type="ChEBI" id="CHEBI:77657"/>
        <dbReference type="ChEBI" id="CHEBI:456216"/>
        <dbReference type="EC" id="6.3.2.6"/>
    </reaction>
</comment>
<comment type="pathway">
    <text evidence="1">Purine metabolism; IMP biosynthesis via de novo pathway; 5-amino-1-(5-phospho-D-ribosyl)imidazole-4-carboxamide from 5-amino-1-(5-phospho-D-ribosyl)imidazole-4-carboxylate: step 1/2.</text>
</comment>
<comment type="similarity">
    <text evidence="1">Belongs to the SAICAR synthetase family.</text>
</comment>
<accession>A5IMW3</accession>
<reference key="1">
    <citation type="submission" date="2007-05" db="EMBL/GenBank/DDBJ databases">
        <title>Complete sequence of Thermotoga petrophila RKU-1.</title>
        <authorList>
            <consortium name="US DOE Joint Genome Institute"/>
            <person name="Copeland A."/>
            <person name="Lucas S."/>
            <person name="Lapidus A."/>
            <person name="Barry K."/>
            <person name="Glavina del Rio T."/>
            <person name="Dalin E."/>
            <person name="Tice H."/>
            <person name="Pitluck S."/>
            <person name="Sims D."/>
            <person name="Brettin T."/>
            <person name="Bruce D."/>
            <person name="Detter J.C."/>
            <person name="Han C."/>
            <person name="Tapia R."/>
            <person name="Schmutz J."/>
            <person name="Larimer F."/>
            <person name="Land M."/>
            <person name="Hauser L."/>
            <person name="Kyrpides N."/>
            <person name="Mikhailova N."/>
            <person name="Nelson K."/>
            <person name="Gogarten J.P."/>
            <person name="Noll K."/>
            <person name="Richardson P."/>
        </authorList>
    </citation>
    <scope>NUCLEOTIDE SEQUENCE [LARGE SCALE GENOMIC DNA]</scope>
    <source>
        <strain>ATCC BAA-488 / DSM 13995 / JCM 10881 / RKU-1</strain>
    </source>
</reference>
<organism>
    <name type="scientific">Thermotoga petrophila (strain ATCC BAA-488 / DSM 13995 / JCM 10881 / RKU-1)</name>
    <dbReference type="NCBI Taxonomy" id="390874"/>
    <lineage>
        <taxon>Bacteria</taxon>
        <taxon>Thermotogati</taxon>
        <taxon>Thermotogota</taxon>
        <taxon>Thermotogae</taxon>
        <taxon>Thermotogales</taxon>
        <taxon>Thermotogaceae</taxon>
        <taxon>Thermotoga</taxon>
    </lineage>
</organism>
<dbReference type="EC" id="6.3.2.6" evidence="1"/>
<dbReference type="EMBL" id="CP000702">
    <property type="protein sequence ID" value="ABQ47536.1"/>
    <property type="molecule type" value="Genomic_DNA"/>
</dbReference>
<dbReference type="RefSeq" id="WP_011943953.1">
    <property type="nucleotide sequence ID" value="NC_009486.1"/>
</dbReference>
<dbReference type="SMR" id="A5IMW3"/>
<dbReference type="STRING" id="390874.Tpet_1528"/>
<dbReference type="KEGG" id="tpt:Tpet_1528"/>
<dbReference type="eggNOG" id="COG0152">
    <property type="taxonomic scope" value="Bacteria"/>
</dbReference>
<dbReference type="HOGENOM" id="CLU_061495_0_0_0"/>
<dbReference type="UniPathway" id="UPA00074">
    <property type="reaction ID" value="UER00131"/>
</dbReference>
<dbReference type="Proteomes" id="UP000006558">
    <property type="component" value="Chromosome"/>
</dbReference>
<dbReference type="GO" id="GO:0005524">
    <property type="term" value="F:ATP binding"/>
    <property type="evidence" value="ECO:0007669"/>
    <property type="project" value="UniProtKB-KW"/>
</dbReference>
<dbReference type="GO" id="GO:0004639">
    <property type="term" value="F:phosphoribosylaminoimidazolesuccinocarboxamide synthase activity"/>
    <property type="evidence" value="ECO:0007669"/>
    <property type="project" value="UniProtKB-UniRule"/>
</dbReference>
<dbReference type="GO" id="GO:0006189">
    <property type="term" value="P:'de novo' IMP biosynthetic process"/>
    <property type="evidence" value="ECO:0007669"/>
    <property type="project" value="UniProtKB-UniRule"/>
</dbReference>
<dbReference type="GO" id="GO:0009236">
    <property type="term" value="P:cobalamin biosynthetic process"/>
    <property type="evidence" value="ECO:0007669"/>
    <property type="project" value="InterPro"/>
</dbReference>
<dbReference type="CDD" id="cd01415">
    <property type="entry name" value="SAICAR_synt_PurC"/>
    <property type="match status" value="1"/>
</dbReference>
<dbReference type="FunFam" id="3.30.200.20:FF:000865">
    <property type="entry name" value="Phosphoribosylaminoimidazole-succinocarboxamide synthase"/>
    <property type="match status" value="1"/>
</dbReference>
<dbReference type="Gene3D" id="3.30.470.20">
    <property type="entry name" value="ATP-grasp fold, B domain"/>
    <property type="match status" value="1"/>
</dbReference>
<dbReference type="Gene3D" id="3.30.200.20">
    <property type="entry name" value="Phosphorylase Kinase, domain 1"/>
    <property type="match status" value="1"/>
</dbReference>
<dbReference type="HAMAP" id="MF_00137">
    <property type="entry name" value="SAICAR_synth"/>
    <property type="match status" value="1"/>
</dbReference>
<dbReference type="InterPro" id="IPR028923">
    <property type="entry name" value="SAICAR_synt/ADE2_N"/>
</dbReference>
<dbReference type="InterPro" id="IPR033934">
    <property type="entry name" value="SAICAR_synt_PurC"/>
</dbReference>
<dbReference type="InterPro" id="IPR050089">
    <property type="entry name" value="SAICAR_synthetase"/>
</dbReference>
<dbReference type="InterPro" id="IPR018236">
    <property type="entry name" value="SAICAR_synthetase_CS"/>
</dbReference>
<dbReference type="PANTHER" id="PTHR43599">
    <property type="entry name" value="MULTIFUNCTIONAL PROTEIN ADE2"/>
    <property type="match status" value="1"/>
</dbReference>
<dbReference type="PANTHER" id="PTHR43599:SF3">
    <property type="entry name" value="SI:DKEY-6E2.2"/>
    <property type="match status" value="1"/>
</dbReference>
<dbReference type="Pfam" id="PF01259">
    <property type="entry name" value="SAICAR_synt"/>
    <property type="match status" value="1"/>
</dbReference>
<dbReference type="SUPFAM" id="SSF56104">
    <property type="entry name" value="SAICAR synthase-like"/>
    <property type="match status" value="1"/>
</dbReference>
<dbReference type="PROSITE" id="PS01057">
    <property type="entry name" value="SAICAR_SYNTHETASE_1"/>
    <property type="match status" value="1"/>
</dbReference>
<protein>
    <recommendedName>
        <fullName evidence="1">Phosphoribosylaminoimidazole-succinocarboxamide synthase</fullName>
        <ecNumber evidence="1">6.3.2.6</ecNumber>
    </recommendedName>
    <alternativeName>
        <fullName evidence="1">SAICAR synthetase</fullName>
    </alternativeName>
</protein>
<name>PUR7_THEP1</name>
<proteinExistence type="inferred from homology"/>
<sequence length="230" mass="26303">MNYEGKTKIVKVTDDYALLEFKDDITAGDGLKHDVLTGKGSICAETTAILMKYLSEKGIKTHLVEYIPPRTLKVIPLKMFPLEVVVRLKKAGSFVRRYGGVEGEDLPVPLVEFFIKDDERHDPMVCVDHLEILGIATREQAEKMKEAAVKATLALKEFFERANFELWDIKYEFGLDKDGNVVLGDEISPDTFRLRKKGEIFDKDVYRRDLGDPLKKYREVLELCRSLNSQ</sequence>
<gene>
    <name evidence="1" type="primary">purC</name>
    <name type="ordered locus">Tpet_1528</name>
</gene>
<keyword id="KW-0067">ATP-binding</keyword>
<keyword id="KW-0436">Ligase</keyword>
<keyword id="KW-0547">Nucleotide-binding</keyword>
<keyword id="KW-0658">Purine biosynthesis</keyword>
<evidence type="ECO:0000255" key="1">
    <source>
        <dbReference type="HAMAP-Rule" id="MF_00137"/>
    </source>
</evidence>
<feature type="chain" id="PRO_1000117858" description="Phosphoribosylaminoimidazole-succinocarboxamide synthase">
    <location>
        <begin position="1"/>
        <end position="230"/>
    </location>
</feature>